<gene>
    <name type="primary">ampp</name>
    <name type="ORF">TSTA_118800</name>
</gene>
<keyword id="KW-0031">Aminopeptidase</keyword>
<keyword id="KW-0378">Hydrolase</keyword>
<keyword id="KW-0464">Manganese</keyword>
<keyword id="KW-0479">Metal-binding</keyword>
<keyword id="KW-0482">Metalloprotease</keyword>
<keyword id="KW-0645">Protease</keyword>
<keyword id="KW-1185">Reference proteome</keyword>
<organism>
    <name type="scientific">Talaromyces stipitatus (strain ATCC 10500 / CBS 375.48 / QM 6759 / NRRL 1006)</name>
    <name type="common">Penicillium stipitatum</name>
    <dbReference type="NCBI Taxonomy" id="441959"/>
    <lineage>
        <taxon>Eukaryota</taxon>
        <taxon>Fungi</taxon>
        <taxon>Dikarya</taxon>
        <taxon>Ascomycota</taxon>
        <taxon>Pezizomycotina</taxon>
        <taxon>Eurotiomycetes</taxon>
        <taxon>Eurotiomycetidae</taxon>
        <taxon>Eurotiales</taxon>
        <taxon>Trichocomaceae</taxon>
        <taxon>Talaromyces</taxon>
        <taxon>Talaromyces sect. Talaromyces</taxon>
    </lineage>
</organism>
<protein>
    <recommendedName>
        <fullName>Probable Xaa-Pro aminopeptidase P</fullName>
        <shortName>AMPP</shortName>
        <shortName>Aminopeptidase P</shortName>
        <ecNumber>3.4.11.9</ecNumber>
    </recommendedName>
    <alternativeName>
        <fullName>Aminoacylproline aminopeptidase</fullName>
    </alternativeName>
    <alternativeName>
        <fullName>Prolidase</fullName>
    </alternativeName>
</protein>
<reference key="1">
    <citation type="journal article" date="2015" name="Genome Announc.">
        <title>Genome sequence of the AIDS-associated pathogen Penicillium marneffei (ATCC18224) and its near taxonomic relative Talaromyces stipitatus (ATCC10500).</title>
        <authorList>
            <person name="Nierman W.C."/>
            <person name="Fedorova-Abrams N.D."/>
            <person name="Andrianopoulos A."/>
        </authorList>
    </citation>
    <scope>NUCLEOTIDE SEQUENCE [LARGE SCALE GENOMIC DNA]</scope>
    <source>
        <strain>ATCC 10500 / CBS 375.48 / QM 6759 / NRRL 1006</strain>
    </source>
</reference>
<feature type="chain" id="PRO_0000411811" description="Probable Xaa-Pro aminopeptidase P">
    <location>
        <begin position="1"/>
        <end position="657"/>
    </location>
</feature>
<feature type="binding site" evidence="1">
    <location>
        <position position="453"/>
    </location>
    <ligand>
        <name>Mn(2+)</name>
        <dbReference type="ChEBI" id="CHEBI:29035"/>
        <label>2</label>
    </ligand>
</feature>
<feature type="binding site" evidence="1">
    <location>
        <position position="464"/>
    </location>
    <ligand>
        <name>Mn(2+)</name>
        <dbReference type="ChEBI" id="CHEBI:29035"/>
        <label>1</label>
    </ligand>
</feature>
<feature type="binding site" evidence="1">
    <location>
        <position position="464"/>
    </location>
    <ligand>
        <name>Mn(2+)</name>
        <dbReference type="ChEBI" id="CHEBI:29035"/>
        <label>2</label>
    </ligand>
</feature>
<feature type="binding site" evidence="1">
    <location>
        <position position="562"/>
    </location>
    <ligand>
        <name>Mn(2+)</name>
        <dbReference type="ChEBI" id="CHEBI:29035"/>
        <label>1</label>
    </ligand>
</feature>
<feature type="binding site" evidence="1">
    <location>
        <position position="576"/>
    </location>
    <ligand>
        <name>Mn(2+)</name>
        <dbReference type="ChEBI" id="CHEBI:29035"/>
        <label>1</label>
    </ligand>
</feature>
<feature type="binding site" evidence="1">
    <location>
        <position position="576"/>
    </location>
    <ligand>
        <name>Mn(2+)</name>
        <dbReference type="ChEBI" id="CHEBI:29035"/>
        <label>2</label>
    </ligand>
</feature>
<evidence type="ECO:0000250" key="1"/>
<evidence type="ECO:0000305" key="2"/>
<name>AMPP1_TALSN</name>
<proteinExistence type="inferred from homology"/>
<comment type="function">
    <text evidence="1">Catalyzes the removal of a penultimate prolyl residue from the N-termini of peptides.</text>
</comment>
<comment type="catalytic activity">
    <reaction>
        <text>Release of any N-terminal amino acid, including proline, that is linked to proline, even from a dipeptide or tripeptide.</text>
        <dbReference type="EC" id="3.4.11.9"/>
    </reaction>
</comment>
<comment type="cofactor">
    <cofactor evidence="1">
        <name>Mn(2+)</name>
        <dbReference type="ChEBI" id="CHEBI:29035"/>
    </cofactor>
    <text evidence="1">Binds 2 manganese ions per subunit.</text>
</comment>
<comment type="similarity">
    <text evidence="2">Belongs to the peptidase M24B family.</text>
</comment>
<dbReference type="EC" id="3.4.11.9"/>
<dbReference type="EMBL" id="EQ962655">
    <property type="protein sequence ID" value="EED18114.1"/>
    <property type="molecule type" value="Genomic_DNA"/>
</dbReference>
<dbReference type="RefSeq" id="XP_002482106.1">
    <property type="nucleotide sequence ID" value="XM_002482061.1"/>
</dbReference>
<dbReference type="SMR" id="B8M9W2"/>
<dbReference type="FunCoup" id="B8M9W2">
    <property type="interactions" value="393"/>
</dbReference>
<dbReference type="STRING" id="441959.B8M9W2"/>
<dbReference type="MEROPS" id="M24.009"/>
<dbReference type="GeneID" id="8108554"/>
<dbReference type="VEuPathDB" id="FungiDB:TSTA_118800"/>
<dbReference type="eggNOG" id="KOG2413">
    <property type="taxonomic scope" value="Eukaryota"/>
</dbReference>
<dbReference type="HOGENOM" id="CLU_011781_2_2_1"/>
<dbReference type="InParanoid" id="B8M9W2"/>
<dbReference type="OMA" id="EPGMILS"/>
<dbReference type="OrthoDB" id="9995434at2759"/>
<dbReference type="PhylomeDB" id="B8M9W2"/>
<dbReference type="Proteomes" id="UP000001745">
    <property type="component" value="Unassembled WGS sequence"/>
</dbReference>
<dbReference type="GO" id="GO:0005737">
    <property type="term" value="C:cytoplasm"/>
    <property type="evidence" value="ECO:0007669"/>
    <property type="project" value="UniProtKB-ARBA"/>
</dbReference>
<dbReference type="GO" id="GO:0046872">
    <property type="term" value="F:metal ion binding"/>
    <property type="evidence" value="ECO:0007669"/>
    <property type="project" value="UniProtKB-KW"/>
</dbReference>
<dbReference type="GO" id="GO:0070006">
    <property type="term" value="F:metalloaminopeptidase activity"/>
    <property type="evidence" value="ECO:0007669"/>
    <property type="project" value="InterPro"/>
</dbReference>
<dbReference type="GO" id="GO:0006508">
    <property type="term" value="P:proteolysis"/>
    <property type="evidence" value="ECO:0007669"/>
    <property type="project" value="UniProtKB-KW"/>
</dbReference>
<dbReference type="CDD" id="cd01085">
    <property type="entry name" value="APP"/>
    <property type="match status" value="1"/>
</dbReference>
<dbReference type="FunFam" id="3.40.350.10:FF:000010">
    <property type="entry name" value="Probable Xaa-Pro aminopeptidase P"/>
    <property type="match status" value="1"/>
</dbReference>
<dbReference type="FunFam" id="3.90.230.10:FF:000007">
    <property type="entry name" value="Xaa-Pro aminopeptidase P"/>
    <property type="match status" value="1"/>
</dbReference>
<dbReference type="FunFam" id="3.40.350.10:FF:000003">
    <property type="entry name" value="Xaa-pro aminopeptidase P"/>
    <property type="match status" value="1"/>
</dbReference>
<dbReference type="Gene3D" id="3.90.230.10">
    <property type="entry name" value="Creatinase/methionine aminopeptidase superfamily"/>
    <property type="match status" value="1"/>
</dbReference>
<dbReference type="Gene3D" id="3.40.350.10">
    <property type="entry name" value="Creatinase/prolidase N-terminal domain"/>
    <property type="match status" value="2"/>
</dbReference>
<dbReference type="InterPro" id="IPR029149">
    <property type="entry name" value="Creatin/AminoP/Spt16_N"/>
</dbReference>
<dbReference type="InterPro" id="IPR036005">
    <property type="entry name" value="Creatinase/aminopeptidase-like"/>
</dbReference>
<dbReference type="InterPro" id="IPR000587">
    <property type="entry name" value="Creatinase_N"/>
</dbReference>
<dbReference type="InterPro" id="IPR000994">
    <property type="entry name" value="Pept_M24"/>
</dbReference>
<dbReference type="InterPro" id="IPR033740">
    <property type="entry name" value="Pept_M24B"/>
</dbReference>
<dbReference type="InterPro" id="IPR032416">
    <property type="entry name" value="Peptidase_M24_C"/>
</dbReference>
<dbReference type="InterPro" id="IPR050422">
    <property type="entry name" value="X-Pro_aminopeptidase_P"/>
</dbReference>
<dbReference type="PANTHER" id="PTHR43763">
    <property type="entry name" value="XAA-PRO AMINOPEPTIDASE 1"/>
    <property type="match status" value="1"/>
</dbReference>
<dbReference type="PANTHER" id="PTHR43763:SF6">
    <property type="entry name" value="XAA-PRO AMINOPEPTIDASE 1"/>
    <property type="match status" value="1"/>
</dbReference>
<dbReference type="Pfam" id="PF01321">
    <property type="entry name" value="Creatinase_N"/>
    <property type="match status" value="1"/>
</dbReference>
<dbReference type="Pfam" id="PF16189">
    <property type="entry name" value="Creatinase_N_2"/>
    <property type="match status" value="1"/>
</dbReference>
<dbReference type="Pfam" id="PF00557">
    <property type="entry name" value="Peptidase_M24"/>
    <property type="match status" value="1"/>
</dbReference>
<dbReference type="Pfam" id="PF16188">
    <property type="entry name" value="Peptidase_M24_C"/>
    <property type="match status" value="1"/>
</dbReference>
<dbReference type="SUPFAM" id="SSF55920">
    <property type="entry name" value="Creatinase/aminopeptidase"/>
    <property type="match status" value="1"/>
</dbReference>
<dbReference type="SUPFAM" id="SSF53092">
    <property type="entry name" value="Creatinase/prolidase N-terminal domain"/>
    <property type="match status" value="1"/>
</dbReference>
<sequence>MLFSCRAPSLLQRTALSSPLRLFAPCRPSFSRTFVTTTVRFSVEMETVNTSERLAQLRELMKQNNLDVYIVPSEDSHQSEYIAHCDARREFISGFTGSAGTAVISTTAAALSTDGRYFNQAAKQLDSNWKLLKRGLEGVLTWQEWTAEQAEGGKIVGVDPSVITAASARKLSETLEKGGSKLVGIEQNLVDQIWGTHRPQRPSEKVKIHPIEYAGKPFQEKIADLRKELKTKKRAGFIVSVLDEIAWLFNLRGNDIPYNPVFFSYAVITPDTVDLYIDDEKLSPEVKVHLGSDVVIKPYESIFADAKALSAKAPLTESGAPMKYLTSNKASWALSLSFGGEKKLDEARSPISDAKAIKNEVELKGMRDCHIRDGAALTEYFAWLENELINKKSTLDEVDGADKLEQIRSKHDKFVGLSFDTISSTGPNAAVIHYKPEKGVCSVIDPNAIYLCDSGAQYLDGTTDTTRTFHFSTPTEMEKKAFTLVLKGLIALDTAVFPKGTSGFALDALARQHLWRQGLDYLHGTGHGVGAYLNVHEGPIGVGTRIQYSEVSLSPGNVISDEPGYYEDGKFGIRIENIIMAREVETPYKFGDKPWLGFEHVTMTPIGQNLIETSLLSKEERQWVDNYHAEVWEKTSGFFKQDELTLNWLKKETQPLK</sequence>
<accession>B8M9W2</accession>